<name>EFTS_SALTO</name>
<organism>
    <name type="scientific">Salinispora tropica (strain ATCC BAA-916 / DSM 44818 / JCM 13857 / NBRC 105044 / CNB-440)</name>
    <dbReference type="NCBI Taxonomy" id="369723"/>
    <lineage>
        <taxon>Bacteria</taxon>
        <taxon>Bacillati</taxon>
        <taxon>Actinomycetota</taxon>
        <taxon>Actinomycetes</taxon>
        <taxon>Micromonosporales</taxon>
        <taxon>Micromonosporaceae</taxon>
        <taxon>Salinispora</taxon>
    </lineage>
</organism>
<gene>
    <name evidence="1" type="primary">tsf</name>
    <name type="ordered locus">Strop_1323</name>
</gene>
<proteinExistence type="inferred from homology"/>
<accession>A4X4J3</accession>
<reference key="1">
    <citation type="journal article" date="2007" name="Proc. Natl. Acad. Sci. U.S.A.">
        <title>Genome sequencing reveals complex secondary metabolome in the marine actinomycete Salinispora tropica.</title>
        <authorList>
            <person name="Udwary D.W."/>
            <person name="Zeigler L."/>
            <person name="Asolkar R.N."/>
            <person name="Singan V."/>
            <person name="Lapidus A."/>
            <person name="Fenical W."/>
            <person name="Jensen P.R."/>
            <person name="Moore B.S."/>
        </authorList>
    </citation>
    <scope>NUCLEOTIDE SEQUENCE [LARGE SCALE GENOMIC DNA]</scope>
    <source>
        <strain>ATCC BAA-916 / DSM 44818 / JCM 13857 / NBRC 105044 / CNB-440</strain>
    </source>
</reference>
<dbReference type="EMBL" id="CP000667">
    <property type="protein sequence ID" value="ABP53793.1"/>
    <property type="molecule type" value="Genomic_DNA"/>
</dbReference>
<dbReference type="RefSeq" id="WP_011905225.1">
    <property type="nucleotide sequence ID" value="NC_009380.1"/>
</dbReference>
<dbReference type="SMR" id="A4X4J3"/>
<dbReference type="STRING" id="369723.Strop_1323"/>
<dbReference type="KEGG" id="stp:Strop_1323"/>
<dbReference type="PATRIC" id="fig|369723.5.peg.1349"/>
<dbReference type="eggNOG" id="COG0264">
    <property type="taxonomic scope" value="Bacteria"/>
</dbReference>
<dbReference type="HOGENOM" id="CLU_047155_0_0_11"/>
<dbReference type="Proteomes" id="UP000000235">
    <property type="component" value="Chromosome"/>
</dbReference>
<dbReference type="GO" id="GO:0005737">
    <property type="term" value="C:cytoplasm"/>
    <property type="evidence" value="ECO:0007669"/>
    <property type="project" value="UniProtKB-SubCell"/>
</dbReference>
<dbReference type="GO" id="GO:0003746">
    <property type="term" value="F:translation elongation factor activity"/>
    <property type="evidence" value="ECO:0007669"/>
    <property type="project" value="UniProtKB-UniRule"/>
</dbReference>
<dbReference type="CDD" id="cd14275">
    <property type="entry name" value="UBA_EF-Ts"/>
    <property type="match status" value="1"/>
</dbReference>
<dbReference type="FunFam" id="1.10.286.20:FF:000001">
    <property type="entry name" value="Elongation factor Ts"/>
    <property type="match status" value="1"/>
</dbReference>
<dbReference type="FunFam" id="1.10.8.10:FF:000001">
    <property type="entry name" value="Elongation factor Ts"/>
    <property type="match status" value="1"/>
</dbReference>
<dbReference type="Gene3D" id="1.10.286.20">
    <property type="match status" value="1"/>
</dbReference>
<dbReference type="Gene3D" id="1.10.8.10">
    <property type="entry name" value="DNA helicase RuvA subunit, C-terminal domain"/>
    <property type="match status" value="1"/>
</dbReference>
<dbReference type="Gene3D" id="3.30.479.20">
    <property type="entry name" value="Elongation factor Ts, dimerisation domain"/>
    <property type="match status" value="2"/>
</dbReference>
<dbReference type="HAMAP" id="MF_00050">
    <property type="entry name" value="EF_Ts"/>
    <property type="match status" value="1"/>
</dbReference>
<dbReference type="InterPro" id="IPR036402">
    <property type="entry name" value="EF-Ts_dimer_sf"/>
</dbReference>
<dbReference type="InterPro" id="IPR001816">
    <property type="entry name" value="Transl_elong_EFTs/EF1B"/>
</dbReference>
<dbReference type="InterPro" id="IPR014039">
    <property type="entry name" value="Transl_elong_EFTs/EF1B_dimer"/>
</dbReference>
<dbReference type="InterPro" id="IPR018101">
    <property type="entry name" value="Transl_elong_Ts_CS"/>
</dbReference>
<dbReference type="InterPro" id="IPR009060">
    <property type="entry name" value="UBA-like_sf"/>
</dbReference>
<dbReference type="NCBIfam" id="TIGR00116">
    <property type="entry name" value="tsf"/>
    <property type="match status" value="1"/>
</dbReference>
<dbReference type="PANTHER" id="PTHR11741">
    <property type="entry name" value="ELONGATION FACTOR TS"/>
    <property type="match status" value="1"/>
</dbReference>
<dbReference type="PANTHER" id="PTHR11741:SF0">
    <property type="entry name" value="ELONGATION FACTOR TS, MITOCHONDRIAL"/>
    <property type="match status" value="1"/>
</dbReference>
<dbReference type="Pfam" id="PF00889">
    <property type="entry name" value="EF_TS"/>
    <property type="match status" value="1"/>
</dbReference>
<dbReference type="SUPFAM" id="SSF54713">
    <property type="entry name" value="Elongation factor Ts (EF-Ts), dimerisation domain"/>
    <property type="match status" value="1"/>
</dbReference>
<dbReference type="SUPFAM" id="SSF46934">
    <property type="entry name" value="UBA-like"/>
    <property type="match status" value="1"/>
</dbReference>
<dbReference type="PROSITE" id="PS01126">
    <property type="entry name" value="EF_TS_1"/>
    <property type="match status" value="1"/>
</dbReference>
<dbReference type="PROSITE" id="PS01127">
    <property type="entry name" value="EF_TS_2"/>
    <property type="match status" value="1"/>
</dbReference>
<feature type="chain" id="PRO_1000074878" description="Elongation factor Ts">
    <location>
        <begin position="1"/>
        <end position="275"/>
    </location>
</feature>
<feature type="region of interest" description="Involved in Mg(2+) ion dislocation from EF-Tu" evidence="1">
    <location>
        <begin position="76"/>
        <end position="79"/>
    </location>
</feature>
<protein>
    <recommendedName>
        <fullName evidence="1">Elongation factor Ts</fullName>
        <shortName evidence="1">EF-Ts</shortName>
    </recommendedName>
</protein>
<evidence type="ECO:0000255" key="1">
    <source>
        <dbReference type="HAMAP-Rule" id="MF_00050"/>
    </source>
</evidence>
<sequence>MSNFTAADVKKLRDLTGAGMMDSKKALTEAEGDFDKAVEVLRVKGAKDVGKRAGRTAANGLVAHSGKALLELNCETDFVAKTDSFVALAQQLVEHGERTGVNSAEELLASEIDGKGVAELIQEQSAKIGEKLVLNRFAKLDGTVAVYLHRKAQDLPPAVGVLVQYTGRTDEAGDADARGVAMQIAAMRPQYLSRDEVPAEVVESERRIAEQTAREENKPEAALPKIVEGRVNSFFKDFVLLEQASVTDNKKPVRQVLAEAGVEVTRFVRFEVGQA</sequence>
<comment type="function">
    <text evidence="1">Associates with the EF-Tu.GDP complex and induces the exchange of GDP to GTP. It remains bound to the aminoacyl-tRNA.EF-Tu.GTP complex up to the GTP hydrolysis stage on the ribosome.</text>
</comment>
<comment type="subcellular location">
    <subcellularLocation>
        <location evidence="1">Cytoplasm</location>
    </subcellularLocation>
</comment>
<comment type="similarity">
    <text evidence="1">Belongs to the EF-Ts family.</text>
</comment>
<keyword id="KW-0963">Cytoplasm</keyword>
<keyword id="KW-0251">Elongation factor</keyword>
<keyword id="KW-0648">Protein biosynthesis</keyword>
<keyword id="KW-1185">Reference proteome</keyword>